<protein>
    <recommendedName>
        <fullName>Probable F-box protein At5g47300</fullName>
    </recommendedName>
</protein>
<evidence type="ECO:0000255" key="1">
    <source>
        <dbReference type="PROSITE-ProRule" id="PRU00080"/>
    </source>
</evidence>
<sequence>MTRKYIYIYIYIILKVRARVGANNKTLINNQSHLIEMRNTLMLSDLPGDLLEEILCRVPATSLKQLRSTCKQWNNLFNNGRFTRKHLDKAPKDFQNLMLSDSRVFSMSVSFHGIPSVEATCELSLIDSFSSFEDKFEISQVFHCDGLLLCTDADNTRIVVWNPCTGKTRWIEPNNRCYYYAFGSYLDKSYGNSYKILSYSGYGYENQELAIYEINSQSWRFLDVTRDCILERYTDYGVSLKGHTYWFASDEKEKNLSVFLVSFDYTTERFRRLRLPYQCPDYNTASLSVVREEKLAVLLQRENTSRTEIWVTSRIGETKVVSWSMVLAVDFPSELFILSGISFLVDAEKKFVVCCDNYFGEDEYDTKNLVHIVGENNKVREVNFGVSESSWPFLFNYVPSLIQIWEGVGGKRKRVE</sequence>
<gene>
    <name type="ordered locus">At5g47300</name>
    <name type="ORF">MQL5.16</name>
</gene>
<name>FB340_ARATH</name>
<proteinExistence type="predicted"/>
<organism>
    <name type="scientific">Arabidopsis thaliana</name>
    <name type="common">Mouse-ear cress</name>
    <dbReference type="NCBI Taxonomy" id="3702"/>
    <lineage>
        <taxon>Eukaryota</taxon>
        <taxon>Viridiplantae</taxon>
        <taxon>Streptophyta</taxon>
        <taxon>Embryophyta</taxon>
        <taxon>Tracheophyta</taxon>
        <taxon>Spermatophyta</taxon>
        <taxon>Magnoliopsida</taxon>
        <taxon>eudicotyledons</taxon>
        <taxon>Gunneridae</taxon>
        <taxon>Pentapetalae</taxon>
        <taxon>rosids</taxon>
        <taxon>malvids</taxon>
        <taxon>Brassicales</taxon>
        <taxon>Brassicaceae</taxon>
        <taxon>Camelineae</taxon>
        <taxon>Arabidopsis</taxon>
    </lineage>
</organism>
<accession>Q9LVS9</accession>
<keyword id="KW-1185">Reference proteome</keyword>
<reference key="1">
    <citation type="journal article" date="2000" name="DNA Res.">
        <title>Structural analysis of Arabidopsis thaliana chromosome 5. X. Sequence features of the regions of 3,076,755 bp covered by sixty P1 and TAC clones.</title>
        <authorList>
            <person name="Sato S."/>
            <person name="Nakamura Y."/>
            <person name="Kaneko T."/>
            <person name="Katoh T."/>
            <person name="Asamizu E."/>
            <person name="Kotani H."/>
            <person name="Tabata S."/>
        </authorList>
    </citation>
    <scope>NUCLEOTIDE SEQUENCE [LARGE SCALE GENOMIC DNA]</scope>
    <source>
        <strain>cv. Columbia</strain>
    </source>
</reference>
<reference key="2">
    <citation type="journal article" date="2017" name="Plant J.">
        <title>Araport11: a complete reannotation of the Arabidopsis thaliana reference genome.</title>
        <authorList>
            <person name="Cheng C.Y."/>
            <person name="Krishnakumar V."/>
            <person name="Chan A.P."/>
            <person name="Thibaud-Nissen F."/>
            <person name="Schobel S."/>
            <person name="Town C.D."/>
        </authorList>
    </citation>
    <scope>GENOME REANNOTATION</scope>
    <source>
        <strain>cv. Columbia</strain>
    </source>
</reference>
<feature type="chain" id="PRO_0000396056" description="Probable F-box protein At5g47300">
    <location>
        <begin position="1"/>
        <end position="416"/>
    </location>
</feature>
<feature type="domain" description="F-box" evidence="1">
    <location>
        <begin position="40"/>
        <end position="86"/>
    </location>
</feature>
<dbReference type="EMBL" id="AB018117">
    <property type="protein sequence ID" value="BAA97164.1"/>
    <property type="molecule type" value="Genomic_DNA"/>
</dbReference>
<dbReference type="EMBL" id="CP002688">
    <property type="protein sequence ID" value="AED95495.1"/>
    <property type="molecule type" value="Genomic_DNA"/>
</dbReference>
<dbReference type="RefSeq" id="NP_199541.1">
    <property type="nucleotide sequence ID" value="NM_124101.1"/>
</dbReference>
<dbReference type="FunCoup" id="Q9LVS9">
    <property type="interactions" value="17"/>
</dbReference>
<dbReference type="PaxDb" id="3702-AT5G47300.1"/>
<dbReference type="EnsemblPlants" id="AT5G47300.1">
    <property type="protein sequence ID" value="AT5G47300.1"/>
    <property type="gene ID" value="AT5G47300"/>
</dbReference>
<dbReference type="GeneID" id="834777"/>
<dbReference type="Gramene" id="AT5G47300.1">
    <property type="protein sequence ID" value="AT5G47300.1"/>
    <property type="gene ID" value="AT5G47300"/>
</dbReference>
<dbReference type="KEGG" id="ath:AT5G47300"/>
<dbReference type="Araport" id="AT5G47300"/>
<dbReference type="TAIR" id="AT5G47300"/>
<dbReference type="HOGENOM" id="CLU_034692_1_2_1"/>
<dbReference type="InParanoid" id="Q9LVS9"/>
<dbReference type="OMA" id="TRWIEPN"/>
<dbReference type="PhylomeDB" id="Q9LVS9"/>
<dbReference type="PRO" id="PR:Q9LVS9"/>
<dbReference type="Proteomes" id="UP000006548">
    <property type="component" value="Chromosome 5"/>
</dbReference>
<dbReference type="CDD" id="cd22157">
    <property type="entry name" value="F-box_AtFBW1-like"/>
    <property type="match status" value="1"/>
</dbReference>
<dbReference type="Gene3D" id="1.20.1280.50">
    <property type="match status" value="1"/>
</dbReference>
<dbReference type="InterPro" id="IPR006527">
    <property type="entry name" value="F-box-assoc_dom_typ1"/>
</dbReference>
<dbReference type="InterPro" id="IPR017451">
    <property type="entry name" value="F-box-assoc_interact_dom"/>
</dbReference>
<dbReference type="InterPro" id="IPR036047">
    <property type="entry name" value="F-box-like_dom_sf"/>
</dbReference>
<dbReference type="InterPro" id="IPR001810">
    <property type="entry name" value="F-box_dom"/>
</dbReference>
<dbReference type="InterPro" id="IPR011043">
    <property type="entry name" value="Gal_Oxase/kelch_b-propeller"/>
</dbReference>
<dbReference type="InterPro" id="IPR050796">
    <property type="entry name" value="SCF_F-box_component"/>
</dbReference>
<dbReference type="NCBIfam" id="TIGR01640">
    <property type="entry name" value="F_box_assoc_1"/>
    <property type="match status" value="1"/>
</dbReference>
<dbReference type="PANTHER" id="PTHR31672">
    <property type="entry name" value="BNACNNG10540D PROTEIN"/>
    <property type="match status" value="1"/>
</dbReference>
<dbReference type="PANTHER" id="PTHR31672:SF13">
    <property type="entry name" value="F-BOX PROTEIN CPR30-LIKE"/>
    <property type="match status" value="1"/>
</dbReference>
<dbReference type="Pfam" id="PF00646">
    <property type="entry name" value="F-box"/>
    <property type="match status" value="1"/>
</dbReference>
<dbReference type="Pfam" id="PF07734">
    <property type="entry name" value="FBA_1"/>
    <property type="match status" value="1"/>
</dbReference>
<dbReference type="SMART" id="SM00256">
    <property type="entry name" value="FBOX"/>
    <property type="match status" value="1"/>
</dbReference>
<dbReference type="SUPFAM" id="SSF81383">
    <property type="entry name" value="F-box domain"/>
    <property type="match status" value="1"/>
</dbReference>
<dbReference type="SUPFAM" id="SSF50965">
    <property type="entry name" value="Galactose oxidase, central domain"/>
    <property type="match status" value="1"/>
</dbReference>
<dbReference type="PROSITE" id="PS50181">
    <property type="entry name" value="FBOX"/>
    <property type="match status" value="1"/>
</dbReference>